<keyword id="KW-0687">Ribonucleoprotein</keyword>
<keyword id="KW-0689">Ribosomal protein</keyword>
<keyword id="KW-0694">RNA-binding</keyword>
<keyword id="KW-0699">rRNA-binding</keyword>
<sequence length="169" mass="18191">MSQAIIAAKAKFVEEFAEELKSAKSIVVINYLGLTVDQVTAFRAELRESNAKMKVVKNTYLRRAAAQAGLDDLAPVFVGPSAVIYTDDEDNVTAPARIAADYAKKFDVVEIKGGALEGQVATKEQVEELAAIPGREGLLSMLLSVLQAPVRNFAYVVKAVAESKEESAE</sequence>
<reference key="1">
    <citation type="journal article" date="2006" name="Proc. Natl. Acad. Sci. U.S.A.">
        <title>Comparative genomics of the lactic acid bacteria.</title>
        <authorList>
            <person name="Makarova K.S."/>
            <person name="Slesarev A."/>
            <person name="Wolf Y.I."/>
            <person name="Sorokin A."/>
            <person name="Mirkin B."/>
            <person name="Koonin E.V."/>
            <person name="Pavlov A."/>
            <person name="Pavlova N."/>
            <person name="Karamychev V."/>
            <person name="Polouchine N."/>
            <person name="Shakhova V."/>
            <person name="Grigoriev I."/>
            <person name="Lou Y."/>
            <person name="Rohksar D."/>
            <person name="Lucas S."/>
            <person name="Huang K."/>
            <person name="Goodstein D.M."/>
            <person name="Hawkins T."/>
            <person name="Plengvidhya V."/>
            <person name="Welker D."/>
            <person name="Hughes J."/>
            <person name="Goh Y."/>
            <person name="Benson A."/>
            <person name="Baldwin K."/>
            <person name="Lee J.-H."/>
            <person name="Diaz-Muniz I."/>
            <person name="Dosti B."/>
            <person name="Smeianov V."/>
            <person name="Wechter W."/>
            <person name="Barabote R."/>
            <person name="Lorca G."/>
            <person name="Altermann E."/>
            <person name="Barrangou R."/>
            <person name="Ganesan B."/>
            <person name="Xie Y."/>
            <person name="Rawsthorne H."/>
            <person name="Tamir D."/>
            <person name="Parker C."/>
            <person name="Breidt F."/>
            <person name="Broadbent J.R."/>
            <person name="Hutkins R."/>
            <person name="O'Sullivan D."/>
            <person name="Steele J."/>
            <person name="Unlu G."/>
            <person name="Saier M.H. Jr."/>
            <person name="Klaenhammer T."/>
            <person name="Richardson P."/>
            <person name="Kozyavkin S."/>
            <person name="Weimer B.C."/>
            <person name="Mills D.A."/>
        </authorList>
    </citation>
    <scope>NUCLEOTIDE SEQUENCE [LARGE SCALE GENOMIC DNA]</scope>
    <source>
        <strain>ATCC BAA-365 / Lb-18</strain>
    </source>
</reference>
<protein>
    <recommendedName>
        <fullName evidence="1">Large ribosomal subunit protein uL10</fullName>
    </recommendedName>
    <alternativeName>
        <fullName evidence="2">50S ribosomal protein L10</fullName>
    </alternativeName>
</protein>
<comment type="function">
    <text evidence="1">Forms part of the ribosomal stalk, playing a central role in the interaction of the ribosome with GTP-bound translation factors.</text>
</comment>
<comment type="subunit">
    <text evidence="1">Part of the ribosomal stalk of the 50S ribosomal subunit. The N-terminus interacts with L11 and the large rRNA to form the base of the stalk. The C-terminus forms an elongated spine to which L12 dimers bind in a sequential fashion forming a multimeric L10(L12)X complex.</text>
</comment>
<comment type="similarity">
    <text evidence="1">Belongs to the universal ribosomal protein uL10 family.</text>
</comment>
<organism>
    <name type="scientific">Lactobacillus delbrueckii subsp. bulgaricus (strain ATCC BAA-365 / Lb-18)</name>
    <dbReference type="NCBI Taxonomy" id="321956"/>
    <lineage>
        <taxon>Bacteria</taxon>
        <taxon>Bacillati</taxon>
        <taxon>Bacillota</taxon>
        <taxon>Bacilli</taxon>
        <taxon>Lactobacillales</taxon>
        <taxon>Lactobacillaceae</taxon>
        <taxon>Lactobacillus</taxon>
    </lineage>
</organism>
<proteinExistence type="inferred from homology"/>
<gene>
    <name evidence="1" type="primary">rplJ</name>
    <name type="ordered locus">LBUL_1537</name>
</gene>
<dbReference type="EMBL" id="CP000412">
    <property type="protein sequence ID" value="ABJ59028.1"/>
    <property type="molecule type" value="Genomic_DNA"/>
</dbReference>
<dbReference type="RefSeq" id="WP_003621925.1">
    <property type="nucleotide sequence ID" value="NC_008529.1"/>
</dbReference>
<dbReference type="SMR" id="Q048U4"/>
<dbReference type="KEGG" id="lbu:LBUL_1537"/>
<dbReference type="HOGENOM" id="CLU_092227_2_0_9"/>
<dbReference type="BioCyc" id="LDEL321956:LBUL_RS07240-MONOMER"/>
<dbReference type="GO" id="GO:0015934">
    <property type="term" value="C:large ribosomal subunit"/>
    <property type="evidence" value="ECO:0007669"/>
    <property type="project" value="InterPro"/>
</dbReference>
<dbReference type="GO" id="GO:0070180">
    <property type="term" value="F:large ribosomal subunit rRNA binding"/>
    <property type="evidence" value="ECO:0007669"/>
    <property type="project" value="UniProtKB-UniRule"/>
</dbReference>
<dbReference type="GO" id="GO:0003735">
    <property type="term" value="F:structural constituent of ribosome"/>
    <property type="evidence" value="ECO:0007669"/>
    <property type="project" value="InterPro"/>
</dbReference>
<dbReference type="GO" id="GO:0006412">
    <property type="term" value="P:translation"/>
    <property type="evidence" value="ECO:0007669"/>
    <property type="project" value="UniProtKB-UniRule"/>
</dbReference>
<dbReference type="CDD" id="cd05797">
    <property type="entry name" value="Ribosomal_L10"/>
    <property type="match status" value="1"/>
</dbReference>
<dbReference type="Gene3D" id="3.30.70.1730">
    <property type="match status" value="1"/>
</dbReference>
<dbReference type="Gene3D" id="6.10.250.290">
    <property type="match status" value="1"/>
</dbReference>
<dbReference type="HAMAP" id="MF_00362">
    <property type="entry name" value="Ribosomal_uL10"/>
    <property type="match status" value="1"/>
</dbReference>
<dbReference type="InterPro" id="IPR001790">
    <property type="entry name" value="Ribosomal_uL10"/>
</dbReference>
<dbReference type="InterPro" id="IPR043141">
    <property type="entry name" value="Ribosomal_uL10-like_sf"/>
</dbReference>
<dbReference type="InterPro" id="IPR022973">
    <property type="entry name" value="Ribosomal_uL10_bac"/>
</dbReference>
<dbReference type="InterPro" id="IPR047865">
    <property type="entry name" value="Ribosomal_uL10_bac_type"/>
</dbReference>
<dbReference type="InterPro" id="IPR002363">
    <property type="entry name" value="Ribosomal_uL10_CS_bac"/>
</dbReference>
<dbReference type="NCBIfam" id="NF000955">
    <property type="entry name" value="PRK00099.1-1"/>
    <property type="match status" value="1"/>
</dbReference>
<dbReference type="PANTHER" id="PTHR11560">
    <property type="entry name" value="39S RIBOSOMAL PROTEIN L10, MITOCHONDRIAL"/>
    <property type="match status" value="1"/>
</dbReference>
<dbReference type="Pfam" id="PF00466">
    <property type="entry name" value="Ribosomal_L10"/>
    <property type="match status" value="1"/>
</dbReference>
<dbReference type="SUPFAM" id="SSF160369">
    <property type="entry name" value="Ribosomal protein L10-like"/>
    <property type="match status" value="1"/>
</dbReference>
<dbReference type="PROSITE" id="PS01109">
    <property type="entry name" value="RIBOSOMAL_L10"/>
    <property type="match status" value="1"/>
</dbReference>
<feature type="chain" id="PRO_1000005519" description="Large ribosomal subunit protein uL10">
    <location>
        <begin position="1"/>
        <end position="169"/>
    </location>
</feature>
<name>RL10_LACDB</name>
<evidence type="ECO:0000255" key="1">
    <source>
        <dbReference type="HAMAP-Rule" id="MF_00362"/>
    </source>
</evidence>
<evidence type="ECO:0000305" key="2"/>
<accession>Q048U4</accession>